<evidence type="ECO:0000255" key="1">
    <source>
        <dbReference type="HAMAP-Rule" id="MF_01216"/>
    </source>
</evidence>
<feature type="chain" id="PRO_0000166322" description="FMN-dependent NADH:quinone oxidoreductase">
    <location>
        <begin position="1"/>
        <end position="207"/>
    </location>
</feature>
<feature type="binding site" evidence="1">
    <location>
        <position position="10"/>
    </location>
    <ligand>
        <name>FMN</name>
        <dbReference type="ChEBI" id="CHEBI:58210"/>
    </ligand>
</feature>
<feature type="binding site" evidence="1">
    <location>
        <begin position="16"/>
        <end position="18"/>
    </location>
    <ligand>
        <name>FMN</name>
        <dbReference type="ChEBI" id="CHEBI:58210"/>
    </ligand>
</feature>
<feature type="binding site" evidence="1">
    <location>
        <begin position="96"/>
        <end position="99"/>
    </location>
    <ligand>
        <name>FMN</name>
        <dbReference type="ChEBI" id="CHEBI:58210"/>
    </ligand>
</feature>
<feature type="binding site" evidence="1">
    <location>
        <begin position="141"/>
        <end position="144"/>
    </location>
    <ligand>
        <name>FMN</name>
        <dbReference type="ChEBI" id="CHEBI:58210"/>
    </ligand>
</feature>
<comment type="function">
    <text evidence="1">Quinone reductase that provides resistance to thiol-specific stress caused by electrophilic quinones.</text>
</comment>
<comment type="function">
    <text evidence="1">Also exhibits azoreductase activity. Catalyzes the reductive cleavage of the azo bond in aromatic azo compounds to the corresponding amines.</text>
</comment>
<comment type="catalytic activity">
    <reaction evidence="1">
        <text>2 a quinone + NADH + H(+) = 2 a 1,4-benzosemiquinone + NAD(+)</text>
        <dbReference type="Rhea" id="RHEA:65952"/>
        <dbReference type="ChEBI" id="CHEBI:15378"/>
        <dbReference type="ChEBI" id="CHEBI:57540"/>
        <dbReference type="ChEBI" id="CHEBI:57945"/>
        <dbReference type="ChEBI" id="CHEBI:132124"/>
        <dbReference type="ChEBI" id="CHEBI:134225"/>
    </reaction>
</comment>
<comment type="catalytic activity">
    <reaction evidence="1">
        <text>N,N-dimethyl-1,4-phenylenediamine + anthranilate + 2 NAD(+) = 2-(4-dimethylaminophenyl)diazenylbenzoate + 2 NADH + 2 H(+)</text>
        <dbReference type="Rhea" id="RHEA:55872"/>
        <dbReference type="ChEBI" id="CHEBI:15378"/>
        <dbReference type="ChEBI" id="CHEBI:15783"/>
        <dbReference type="ChEBI" id="CHEBI:16567"/>
        <dbReference type="ChEBI" id="CHEBI:57540"/>
        <dbReference type="ChEBI" id="CHEBI:57945"/>
        <dbReference type="ChEBI" id="CHEBI:71579"/>
        <dbReference type="EC" id="1.7.1.17"/>
    </reaction>
</comment>
<comment type="cofactor">
    <cofactor evidence="1">
        <name>FMN</name>
        <dbReference type="ChEBI" id="CHEBI:58210"/>
    </cofactor>
    <text evidence="1">Binds 1 FMN per subunit.</text>
</comment>
<comment type="subunit">
    <text evidence="1">Homodimer.</text>
</comment>
<comment type="similarity">
    <text evidence="1">Belongs to the azoreductase type 1 family.</text>
</comment>
<protein>
    <recommendedName>
        <fullName evidence="1">FMN-dependent NADH:quinone oxidoreductase</fullName>
        <ecNumber evidence="1">1.6.5.-</ecNumber>
    </recommendedName>
    <alternativeName>
        <fullName evidence="1">Azo-dye reductase</fullName>
    </alternativeName>
    <alternativeName>
        <fullName evidence="1">FMN-dependent NADH-azo compound oxidoreductase</fullName>
    </alternativeName>
    <alternativeName>
        <fullName evidence="1">FMN-dependent NADH-azoreductase</fullName>
        <ecNumber evidence="1">1.7.1.17</ecNumber>
    </alternativeName>
</protein>
<organism>
    <name type="scientific">Nostoc sp. (strain PCC 7120 / SAG 25.82 / UTEX 2576)</name>
    <dbReference type="NCBI Taxonomy" id="103690"/>
    <lineage>
        <taxon>Bacteria</taxon>
        <taxon>Bacillati</taxon>
        <taxon>Cyanobacteriota</taxon>
        <taxon>Cyanophyceae</taxon>
        <taxon>Nostocales</taxon>
        <taxon>Nostocaceae</taxon>
        <taxon>Nostoc</taxon>
    </lineage>
</organism>
<accession>Q8YV76</accession>
<keyword id="KW-0285">Flavoprotein</keyword>
<keyword id="KW-0288">FMN</keyword>
<keyword id="KW-0520">NAD</keyword>
<keyword id="KW-0560">Oxidoreductase</keyword>
<keyword id="KW-1185">Reference proteome</keyword>
<sequence length="207" mass="22785">MANILHIDSSPRGDRSISRKLSYEFITSWKDTHPGDTVTYRDLGHNPVPHVDEPWIAAAFSSPESHTPELKTAIELSDTLIDEFLAADRLVFGVPMYNLNIPSTFKAYIDQIVRAGKTFTVDANGYKGLVDSSKKVLIITSRGGSYPPGTPYAAYDYQEPYLRAILGFMGLTDVTFIHAESLNMGEDAREKSLAGAKDAIAQAVANW</sequence>
<name>AZOR_NOSS1</name>
<gene>
    <name evidence="1" type="primary">azoR</name>
    <name type="ordered locus">all2105</name>
</gene>
<reference key="1">
    <citation type="journal article" date="2001" name="DNA Res.">
        <title>Complete genomic sequence of the filamentous nitrogen-fixing cyanobacterium Anabaena sp. strain PCC 7120.</title>
        <authorList>
            <person name="Kaneko T."/>
            <person name="Nakamura Y."/>
            <person name="Wolk C.P."/>
            <person name="Kuritz T."/>
            <person name="Sasamoto S."/>
            <person name="Watanabe A."/>
            <person name="Iriguchi M."/>
            <person name="Ishikawa A."/>
            <person name="Kawashima K."/>
            <person name="Kimura T."/>
            <person name="Kishida Y."/>
            <person name="Kohara M."/>
            <person name="Matsumoto M."/>
            <person name="Matsuno A."/>
            <person name="Muraki A."/>
            <person name="Nakazaki N."/>
            <person name="Shimpo S."/>
            <person name="Sugimoto M."/>
            <person name="Takazawa M."/>
            <person name="Yamada M."/>
            <person name="Yasuda M."/>
            <person name="Tabata S."/>
        </authorList>
    </citation>
    <scope>NUCLEOTIDE SEQUENCE [LARGE SCALE GENOMIC DNA]</scope>
    <source>
        <strain>PCC 7120 / SAG 25.82 / UTEX 2576</strain>
    </source>
</reference>
<dbReference type="EC" id="1.6.5.-" evidence="1"/>
<dbReference type="EC" id="1.7.1.17" evidence="1"/>
<dbReference type="EMBL" id="BA000019">
    <property type="protein sequence ID" value="BAB73804.1"/>
    <property type="molecule type" value="Genomic_DNA"/>
</dbReference>
<dbReference type="PIR" id="AC2069">
    <property type="entry name" value="AC2069"/>
</dbReference>
<dbReference type="RefSeq" id="WP_010996263.1">
    <property type="nucleotide sequence ID" value="NZ_RSCN01000033.1"/>
</dbReference>
<dbReference type="SMR" id="Q8YV76"/>
<dbReference type="STRING" id="103690.gene:10494134"/>
<dbReference type="KEGG" id="ana:all2105"/>
<dbReference type="eggNOG" id="COG1182">
    <property type="taxonomic scope" value="Bacteria"/>
</dbReference>
<dbReference type="OrthoDB" id="9805013at2"/>
<dbReference type="BRENDA" id="1.7.1.6">
    <property type="organism ID" value="4371"/>
</dbReference>
<dbReference type="Proteomes" id="UP000002483">
    <property type="component" value="Chromosome"/>
</dbReference>
<dbReference type="GO" id="GO:0009055">
    <property type="term" value="F:electron transfer activity"/>
    <property type="evidence" value="ECO:0007669"/>
    <property type="project" value="UniProtKB-UniRule"/>
</dbReference>
<dbReference type="GO" id="GO:0010181">
    <property type="term" value="F:FMN binding"/>
    <property type="evidence" value="ECO:0007669"/>
    <property type="project" value="UniProtKB-UniRule"/>
</dbReference>
<dbReference type="GO" id="GO:0016652">
    <property type="term" value="F:oxidoreductase activity, acting on NAD(P)H as acceptor"/>
    <property type="evidence" value="ECO:0007669"/>
    <property type="project" value="UniProtKB-UniRule"/>
</dbReference>
<dbReference type="GO" id="GO:0016655">
    <property type="term" value="F:oxidoreductase activity, acting on NAD(P)H, quinone or similar compound as acceptor"/>
    <property type="evidence" value="ECO:0007669"/>
    <property type="project" value="InterPro"/>
</dbReference>
<dbReference type="Gene3D" id="3.40.50.360">
    <property type="match status" value="1"/>
</dbReference>
<dbReference type="HAMAP" id="MF_01216">
    <property type="entry name" value="Azoreductase_type1"/>
    <property type="match status" value="1"/>
</dbReference>
<dbReference type="InterPro" id="IPR003680">
    <property type="entry name" value="Flavodoxin_fold"/>
</dbReference>
<dbReference type="InterPro" id="IPR029039">
    <property type="entry name" value="Flavoprotein-like_sf"/>
</dbReference>
<dbReference type="InterPro" id="IPR050104">
    <property type="entry name" value="FMN-dep_NADH:Q_OxRdtase_AzoR1"/>
</dbReference>
<dbReference type="InterPro" id="IPR023048">
    <property type="entry name" value="NADH:quinone_OxRdtase_FMN_depd"/>
</dbReference>
<dbReference type="PANTHER" id="PTHR43741">
    <property type="entry name" value="FMN-DEPENDENT NADH-AZOREDUCTASE 1"/>
    <property type="match status" value="1"/>
</dbReference>
<dbReference type="PANTHER" id="PTHR43741:SF4">
    <property type="entry name" value="FMN-DEPENDENT NADH:QUINONE OXIDOREDUCTASE"/>
    <property type="match status" value="1"/>
</dbReference>
<dbReference type="Pfam" id="PF02525">
    <property type="entry name" value="Flavodoxin_2"/>
    <property type="match status" value="1"/>
</dbReference>
<dbReference type="SUPFAM" id="SSF52218">
    <property type="entry name" value="Flavoproteins"/>
    <property type="match status" value="1"/>
</dbReference>
<proteinExistence type="inferred from homology"/>